<gene>
    <name type="primary">FANCC</name>
    <name type="synonym">FACC</name>
</gene>
<comment type="function">
    <text evidence="1">DNA repair protein that may operate in a postreplication repair or a cell cycle checkpoint function. May be implicated in interstrand DNA cross-link repair and in the maintenance of normal chromosome stability. Upon IFNG induction, may facilitate STAT1 activation by recruiting STAT1 to IFNGR1 (By similarity).</text>
</comment>
<comment type="subunit">
    <text evidence="1">Belongs to the multisubunit FA complex composed of FANCA, FANCB, FANCC, FANCE, FANCF, FANCG, FANCL/PHF9 and FANCM. This complex may also include HSP70. Interacts with ZBTB32. Upon IFNG induction, interacts with STAT1. Interacts with CDK1. Interacts with EIF2AK2 (By similarity).</text>
</comment>
<comment type="subcellular location">
    <subcellularLocation>
        <location evidence="1">Nucleus</location>
    </subcellularLocation>
    <subcellularLocation>
        <location evidence="1">Cytoplasm</location>
    </subcellularLocation>
    <text>The major form is nuclear. The minor form is cytoplasmic.</text>
</comment>
<feature type="chain" id="PRO_0000087183" description="Fanconi anemia group C protein homolog">
    <location>
        <begin position="1"/>
        <end position="567"/>
    </location>
</feature>
<protein>
    <recommendedName>
        <fullName>Fanconi anemia group C protein homolog</fullName>
        <shortName>Protein FACC</shortName>
    </recommendedName>
</protein>
<keyword id="KW-0963">Cytoplasm</keyword>
<keyword id="KW-0227">DNA damage</keyword>
<keyword id="KW-0234">DNA repair</keyword>
<keyword id="KW-0539">Nucleus</keyword>
<keyword id="KW-1185">Reference proteome</keyword>
<accession>O19104</accession>
<proteinExistence type="evidence at transcript level"/>
<organism>
    <name type="scientific">Bos taurus</name>
    <name type="common">Bovine</name>
    <dbReference type="NCBI Taxonomy" id="9913"/>
    <lineage>
        <taxon>Eukaryota</taxon>
        <taxon>Metazoa</taxon>
        <taxon>Chordata</taxon>
        <taxon>Craniata</taxon>
        <taxon>Vertebrata</taxon>
        <taxon>Euteleostomi</taxon>
        <taxon>Mammalia</taxon>
        <taxon>Eutheria</taxon>
        <taxon>Laurasiatheria</taxon>
        <taxon>Artiodactyla</taxon>
        <taxon>Ruminantia</taxon>
        <taxon>Pecora</taxon>
        <taxon>Bovidae</taxon>
        <taxon>Bovinae</taxon>
        <taxon>Bos</taxon>
    </lineage>
</organism>
<reference key="1">
    <citation type="journal article" date="1997" name="Mamm. Genome">
        <title>Cloning of the bovine and rat Fanconi anemia group C cDNA.</title>
        <authorList>
            <person name="Wong J.C.Y."/>
            <person name="Alon N."/>
            <person name="Buchwald M."/>
        </authorList>
    </citation>
    <scope>NUCLEOTIDE SEQUENCE [MRNA]</scope>
    <source>
        <tissue>Liver</tissue>
    </source>
</reference>
<sequence length="567" mass="64721">MAEDSAGLPSNYQFWMQKLSVWTQASTLETQRDICLHLPQFQEFLRRMYETLKEMDSNAIIERFPTICQLLAKSCWSPFILAYDESPKILIWCLCCLIKKDPQNSRESKLNSWTRRLLSHIVSTSRFDIKEVGLFNQVLGYAPTDYYPGLLKNMVLSLVSELRENHLNGFSSQRRCPERVRSLSRDRVPLLTLPDFEPLVEALLTYHGHEPQEVLCPEFFDAVNEASLLKKISLPTSAILCLWLRHLPSLENTMLHLLEKLISSERNSLRRIKCFMKDSLRPEAAACHPAIFRVVDEIFRSALLETDGAPEVLAGLQVFTRCFVEALEKENKQLKFALKTYFPYASPALVMVLLQHPKDIPQGLWHQSLKHISEMLKEIVEDHGSYGGPFESWFLFVHFGGWADITAEQLLMSEAEAEPPEALLWLLAFSCSPGAGHQQRARTMVEVKTVLGCLTKLFRSPALSARDLQAAAGENLGGDPRPPACQQLVRRLLLHFLLWAPGGHTIAREVITLMAQTDAIMNEIIGFLDYTLYRWDHLCVEAHRSRKLARELLTELREQALPGQVNQ</sequence>
<evidence type="ECO:0000250" key="1"/>
<name>FANCC_BOVIN</name>
<dbReference type="EMBL" id="U73585">
    <property type="protein sequence ID" value="AAB66674.1"/>
    <property type="molecule type" value="mRNA"/>
</dbReference>
<dbReference type="RefSeq" id="NP_776741.1">
    <property type="nucleotide sequence ID" value="NM_174316.2"/>
</dbReference>
<dbReference type="SMR" id="O19104"/>
<dbReference type="FunCoup" id="O19104">
    <property type="interactions" value="500"/>
</dbReference>
<dbReference type="STRING" id="9913.ENSBTAP00000022853"/>
<dbReference type="PaxDb" id="9913-ENSBTAP00000022853"/>
<dbReference type="GeneID" id="281762"/>
<dbReference type="KEGG" id="bta:281762"/>
<dbReference type="CTD" id="2176"/>
<dbReference type="eggNOG" id="ENOG502QSB8">
    <property type="taxonomic scope" value="Eukaryota"/>
</dbReference>
<dbReference type="InParanoid" id="O19104"/>
<dbReference type="OrthoDB" id="10046159at2759"/>
<dbReference type="Proteomes" id="UP000009136">
    <property type="component" value="Unplaced"/>
</dbReference>
<dbReference type="GO" id="GO:0005737">
    <property type="term" value="C:cytoplasm"/>
    <property type="evidence" value="ECO:0007669"/>
    <property type="project" value="UniProtKB-SubCell"/>
</dbReference>
<dbReference type="GO" id="GO:0043240">
    <property type="term" value="C:Fanconi anaemia nuclear complex"/>
    <property type="evidence" value="ECO:0000250"/>
    <property type="project" value="UniProtKB"/>
</dbReference>
<dbReference type="GO" id="GO:0034599">
    <property type="term" value="P:cellular response to oxidative stress"/>
    <property type="evidence" value="ECO:0000318"/>
    <property type="project" value="GO_Central"/>
</dbReference>
<dbReference type="GO" id="GO:0036297">
    <property type="term" value="P:interstrand cross-link repair"/>
    <property type="evidence" value="ECO:0007669"/>
    <property type="project" value="InterPro"/>
</dbReference>
<dbReference type="GO" id="GO:0006289">
    <property type="term" value="P:nucleotide-excision repair"/>
    <property type="evidence" value="ECO:0000318"/>
    <property type="project" value="GO_Central"/>
</dbReference>
<dbReference type="InterPro" id="IPR000686">
    <property type="entry name" value="FANCC"/>
</dbReference>
<dbReference type="PANTHER" id="PTHR16798:SF0">
    <property type="entry name" value="FANCONI ANEMIA GROUP C PROTEIN"/>
    <property type="match status" value="1"/>
</dbReference>
<dbReference type="PANTHER" id="PTHR16798">
    <property type="entry name" value="FANCONI ANEMIA GROUP C PROTEIN FANCC"/>
    <property type="match status" value="1"/>
</dbReference>
<dbReference type="Pfam" id="PF02106">
    <property type="entry name" value="Fanconi_C"/>
    <property type="match status" value="1"/>
</dbReference>
<dbReference type="PIRSF" id="PIRSF018417">
    <property type="entry name" value="FACC_protein"/>
    <property type="match status" value="1"/>
</dbReference>
<dbReference type="PRINTS" id="PR00494">
    <property type="entry name" value="FANCONICGENE"/>
</dbReference>